<evidence type="ECO:0000250" key="1"/>
<evidence type="ECO:0000250" key="2">
    <source>
        <dbReference type="UniProtKB" id="P01116"/>
    </source>
</evidence>
<evidence type="ECO:0000256" key="3">
    <source>
        <dbReference type="SAM" id="MobiDB-lite"/>
    </source>
</evidence>
<evidence type="ECO:0000305" key="4"/>
<keyword id="KW-1003">Cell membrane</keyword>
<keyword id="KW-0342">GTP-binding</keyword>
<keyword id="KW-0378">Hydrolase</keyword>
<keyword id="KW-0449">Lipoprotein</keyword>
<keyword id="KW-0472">Membrane</keyword>
<keyword id="KW-0488">Methylation</keyword>
<keyword id="KW-0547">Nucleotide-binding</keyword>
<keyword id="KW-0636">Prenylation</keyword>
<accession>Q05058</accession>
<organism>
    <name type="scientific">Coprinopsis cinerea</name>
    <name type="common">Inky cap fungus</name>
    <name type="synonym">Hormographiella aspergillata</name>
    <dbReference type="NCBI Taxonomy" id="5346"/>
    <lineage>
        <taxon>Eukaryota</taxon>
        <taxon>Fungi</taxon>
        <taxon>Dikarya</taxon>
        <taxon>Basidiomycota</taxon>
        <taxon>Agaricomycotina</taxon>
        <taxon>Agaricomycetes</taxon>
        <taxon>Agaricomycetidae</taxon>
        <taxon>Agaricales</taxon>
        <taxon>Agaricineae</taxon>
        <taxon>Psathyrellaceae</taxon>
        <taxon>Coprinopsis</taxon>
    </lineage>
</organism>
<gene>
    <name type="primary">CC-RAS</name>
</gene>
<feature type="chain" id="PRO_0000082703" description="24 kDa Ras-like protein">
    <location>
        <begin position="1"/>
        <end position="212"/>
    </location>
</feature>
<feature type="propeptide" id="PRO_0000281357" description="Removed in mature form" evidence="1">
    <location>
        <begin position="213"/>
        <end position="215"/>
    </location>
</feature>
<feature type="region of interest" description="Disordered" evidence="3">
    <location>
        <begin position="179"/>
        <end position="199"/>
    </location>
</feature>
<feature type="short sequence motif" description="Effector region" evidence="4">
    <location>
        <begin position="39"/>
        <end position="47"/>
    </location>
</feature>
<feature type="binding site" evidence="1">
    <location>
        <begin position="17"/>
        <end position="24"/>
    </location>
    <ligand>
        <name>GTP</name>
        <dbReference type="ChEBI" id="CHEBI:37565"/>
    </ligand>
</feature>
<feature type="binding site" evidence="1">
    <location>
        <begin position="64"/>
        <end position="68"/>
    </location>
    <ligand>
        <name>GTP</name>
        <dbReference type="ChEBI" id="CHEBI:37565"/>
    </ligand>
</feature>
<feature type="binding site" evidence="1">
    <location>
        <begin position="123"/>
        <end position="126"/>
    </location>
    <ligand>
        <name>GTP</name>
        <dbReference type="ChEBI" id="CHEBI:37565"/>
    </ligand>
</feature>
<feature type="modified residue" description="Cysteine methyl ester" evidence="1">
    <location>
        <position position="212"/>
    </location>
</feature>
<feature type="lipid moiety-binding region" description="S-farnesyl cysteine" evidence="1">
    <location>
        <position position="212"/>
    </location>
</feature>
<name>RASL_COPCI</name>
<proteinExistence type="inferred from homology"/>
<protein>
    <recommendedName>
        <fullName>24 kDa Ras-like protein</fullName>
        <ecNumber evidence="2">3.6.5.2</ecNumber>
    </recommendedName>
</protein>
<sequence>MAARAQFLREYKLVVVGGGGVGKSALTIQFIQSHFVDEYDPTIEDSYRKQCIIDDEVALLDVLDTAGQEEYGAMREQYMRTGEGFLLVYSITSRNSFEEISIFHQQILRVKDQDSFPVIVVANKCDLEYERQVGMNEGRDLAKHFGCKFIETSAKQRINVDEAFSNLVREIRKYNREQQTGRPAIAAGGGGPAGSYTQDRHHDEAPGCCAGCVIA</sequence>
<reference key="1">
    <citation type="journal article" date="1993" name="Gene">
        <title>Nucleotide sequence of a ras gene from the basidiomycete Coprinus cinereus.</title>
        <authorList>
            <person name="Ishibashi O."/>
            <person name="Shishido K."/>
        </authorList>
    </citation>
    <scope>NUCLEOTIDE SEQUENCE [GENOMIC DNA]</scope>
    <source>
        <strain>NBRC 30114</strain>
    </source>
</reference>
<dbReference type="EC" id="3.6.5.2" evidence="2"/>
<dbReference type="EMBL" id="D13295">
    <property type="protein sequence ID" value="BAA02552.1"/>
    <property type="molecule type" value="Genomic_DNA"/>
</dbReference>
<dbReference type="PIR" id="JN0562">
    <property type="entry name" value="JN0562"/>
</dbReference>
<dbReference type="SMR" id="Q05058"/>
<dbReference type="VEuPathDB" id="FungiDB:CC1G_06445"/>
<dbReference type="VEuPathDB" id="FungiDB:CC2G_007301"/>
<dbReference type="GO" id="GO:0005886">
    <property type="term" value="C:plasma membrane"/>
    <property type="evidence" value="ECO:0007669"/>
    <property type="project" value="UniProtKB-SubCell"/>
</dbReference>
<dbReference type="GO" id="GO:0003925">
    <property type="term" value="F:G protein activity"/>
    <property type="evidence" value="ECO:0007669"/>
    <property type="project" value="UniProtKB-EC"/>
</dbReference>
<dbReference type="GO" id="GO:0005525">
    <property type="term" value="F:GTP binding"/>
    <property type="evidence" value="ECO:0007669"/>
    <property type="project" value="UniProtKB-KW"/>
</dbReference>
<dbReference type="GO" id="GO:0007165">
    <property type="term" value="P:signal transduction"/>
    <property type="evidence" value="ECO:0007669"/>
    <property type="project" value="InterPro"/>
</dbReference>
<dbReference type="CDD" id="cd04138">
    <property type="entry name" value="H_N_K_Ras_like"/>
    <property type="match status" value="1"/>
</dbReference>
<dbReference type="FunFam" id="3.40.50.300:FF:000080">
    <property type="entry name" value="Ras-like GTPase Ras1"/>
    <property type="match status" value="1"/>
</dbReference>
<dbReference type="Gene3D" id="3.40.50.300">
    <property type="entry name" value="P-loop containing nucleotide triphosphate hydrolases"/>
    <property type="match status" value="1"/>
</dbReference>
<dbReference type="InterPro" id="IPR027417">
    <property type="entry name" value="P-loop_NTPase"/>
</dbReference>
<dbReference type="InterPro" id="IPR005225">
    <property type="entry name" value="Small_GTP-bd"/>
</dbReference>
<dbReference type="InterPro" id="IPR001806">
    <property type="entry name" value="Small_GTPase"/>
</dbReference>
<dbReference type="InterPro" id="IPR020849">
    <property type="entry name" value="Small_GTPase_Ras-type"/>
</dbReference>
<dbReference type="NCBIfam" id="TIGR00231">
    <property type="entry name" value="small_GTP"/>
    <property type="match status" value="1"/>
</dbReference>
<dbReference type="PANTHER" id="PTHR24070">
    <property type="entry name" value="RAS, DI-RAS, AND RHEB FAMILY MEMBERS OF SMALL GTPASE SUPERFAMILY"/>
    <property type="match status" value="1"/>
</dbReference>
<dbReference type="Pfam" id="PF00071">
    <property type="entry name" value="Ras"/>
    <property type="match status" value="1"/>
</dbReference>
<dbReference type="PRINTS" id="PR00449">
    <property type="entry name" value="RASTRNSFRMNG"/>
</dbReference>
<dbReference type="SMART" id="SM00175">
    <property type="entry name" value="RAB"/>
    <property type="match status" value="1"/>
</dbReference>
<dbReference type="SMART" id="SM00176">
    <property type="entry name" value="RAN"/>
    <property type="match status" value="1"/>
</dbReference>
<dbReference type="SMART" id="SM00173">
    <property type="entry name" value="RAS"/>
    <property type="match status" value="1"/>
</dbReference>
<dbReference type="SMART" id="SM00174">
    <property type="entry name" value="RHO"/>
    <property type="match status" value="1"/>
</dbReference>
<dbReference type="SUPFAM" id="SSF52540">
    <property type="entry name" value="P-loop containing nucleoside triphosphate hydrolases"/>
    <property type="match status" value="1"/>
</dbReference>
<dbReference type="PROSITE" id="PS51421">
    <property type="entry name" value="RAS"/>
    <property type="match status" value="1"/>
</dbReference>
<comment type="function">
    <text>Ras proteins bind GDP/GTP and possess intrinsic GTPase activity.</text>
</comment>
<comment type="catalytic activity">
    <reaction evidence="2">
        <text>GTP + H2O = GDP + phosphate + H(+)</text>
        <dbReference type="Rhea" id="RHEA:19669"/>
        <dbReference type="ChEBI" id="CHEBI:15377"/>
        <dbReference type="ChEBI" id="CHEBI:15378"/>
        <dbReference type="ChEBI" id="CHEBI:37565"/>
        <dbReference type="ChEBI" id="CHEBI:43474"/>
        <dbReference type="ChEBI" id="CHEBI:58189"/>
        <dbReference type="EC" id="3.6.5.2"/>
    </reaction>
</comment>
<comment type="subcellular location">
    <subcellularLocation>
        <location evidence="4">Cell membrane</location>
        <topology evidence="4">Lipid-anchor</topology>
        <orientation evidence="4">Cytoplasmic side</orientation>
    </subcellularLocation>
</comment>
<comment type="similarity">
    <text evidence="4">Belongs to the small GTPase superfamily. Ras family.</text>
</comment>